<evidence type="ECO:0000255" key="1">
    <source>
        <dbReference type="HAMAP-Rule" id="MF_00454"/>
    </source>
</evidence>
<gene>
    <name evidence="1" type="primary">fluC</name>
    <name evidence="1" type="synonym">crcB</name>
    <name type="ordered locus">Gbem_0702</name>
</gene>
<proteinExistence type="inferred from homology"/>
<dbReference type="EMBL" id="CP001124">
    <property type="protein sequence ID" value="ACH37729.1"/>
    <property type="molecule type" value="Genomic_DNA"/>
</dbReference>
<dbReference type="RefSeq" id="WP_012529136.1">
    <property type="nucleotide sequence ID" value="NC_011146.1"/>
</dbReference>
<dbReference type="SMR" id="B5EDZ1"/>
<dbReference type="STRING" id="404380.Gbem_0702"/>
<dbReference type="KEGG" id="gbm:Gbem_0702"/>
<dbReference type="eggNOG" id="COG0239">
    <property type="taxonomic scope" value="Bacteria"/>
</dbReference>
<dbReference type="HOGENOM" id="CLU_114342_3_2_7"/>
<dbReference type="OrthoDB" id="9806299at2"/>
<dbReference type="Proteomes" id="UP000008825">
    <property type="component" value="Chromosome"/>
</dbReference>
<dbReference type="GO" id="GO:0005886">
    <property type="term" value="C:plasma membrane"/>
    <property type="evidence" value="ECO:0007669"/>
    <property type="project" value="UniProtKB-SubCell"/>
</dbReference>
<dbReference type="GO" id="GO:0062054">
    <property type="term" value="F:fluoride channel activity"/>
    <property type="evidence" value="ECO:0007669"/>
    <property type="project" value="UniProtKB-UniRule"/>
</dbReference>
<dbReference type="GO" id="GO:0046872">
    <property type="term" value="F:metal ion binding"/>
    <property type="evidence" value="ECO:0007669"/>
    <property type="project" value="UniProtKB-KW"/>
</dbReference>
<dbReference type="GO" id="GO:0140114">
    <property type="term" value="P:cellular detoxification of fluoride"/>
    <property type="evidence" value="ECO:0007669"/>
    <property type="project" value="UniProtKB-UniRule"/>
</dbReference>
<dbReference type="HAMAP" id="MF_00454">
    <property type="entry name" value="FluC"/>
    <property type="match status" value="1"/>
</dbReference>
<dbReference type="InterPro" id="IPR003691">
    <property type="entry name" value="FluC"/>
</dbReference>
<dbReference type="NCBIfam" id="TIGR00494">
    <property type="entry name" value="crcB"/>
    <property type="match status" value="1"/>
</dbReference>
<dbReference type="PANTHER" id="PTHR28259">
    <property type="entry name" value="FLUORIDE EXPORT PROTEIN 1-RELATED"/>
    <property type="match status" value="1"/>
</dbReference>
<dbReference type="PANTHER" id="PTHR28259:SF1">
    <property type="entry name" value="FLUORIDE EXPORT PROTEIN 1-RELATED"/>
    <property type="match status" value="1"/>
</dbReference>
<dbReference type="Pfam" id="PF02537">
    <property type="entry name" value="CRCB"/>
    <property type="match status" value="1"/>
</dbReference>
<reference key="1">
    <citation type="submission" date="2008-07" db="EMBL/GenBank/DDBJ databases">
        <title>Complete sequence of Geobacter bemidjiensis BEM.</title>
        <authorList>
            <consortium name="US DOE Joint Genome Institute"/>
            <person name="Lucas S."/>
            <person name="Copeland A."/>
            <person name="Lapidus A."/>
            <person name="Glavina del Rio T."/>
            <person name="Dalin E."/>
            <person name="Tice H."/>
            <person name="Bruce D."/>
            <person name="Goodwin L."/>
            <person name="Pitluck S."/>
            <person name="Kiss H."/>
            <person name="Brettin T."/>
            <person name="Detter J.C."/>
            <person name="Han C."/>
            <person name="Kuske C.R."/>
            <person name="Schmutz J."/>
            <person name="Larimer F."/>
            <person name="Land M."/>
            <person name="Hauser L."/>
            <person name="Kyrpides N."/>
            <person name="Lykidis A."/>
            <person name="Lovley D."/>
            <person name="Richardson P."/>
        </authorList>
    </citation>
    <scope>NUCLEOTIDE SEQUENCE [LARGE SCALE GENOMIC DNA]</scope>
    <source>
        <strain>ATCC BAA-1014 / DSM 16622 / JCM 12645 / Bem</strain>
    </source>
</reference>
<keyword id="KW-0997">Cell inner membrane</keyword>
<keyword id="KW-1003">Cell membrane</keyword>
<keyword id="KW-0407">Ion channel</keyword>
<keyword id="KW-0406">Ion transport</keyword>
<keyword id="KW-0472">Membrane</keyword>
<keyword id="KW-0479">Metal-binding</keyword>
<keyword id="KW-1185">Reference proteome</keyword>
<keyword id="KW-0915">Sodium</keyword>
<keyword id="KW-0812">Transmembrane</keyword>
<keyword id="KW-1133">Transmembrane helix</keyword>
<keyword id="KW-0813">Transport</keyword>
<organism>
    <name type="scientific">Citrifermentans bemidjiense (strain ATCC BAA-1014 / DSM 16622 / JCM 12645 / Bem)</name>
    <name type="common">Geobacter bemidjiensis</name>
    <dbReference type="NCBI Taxonomy" id="404380"/>
    <lineage>
        <taxon>Bacteria</taxon>
        <taxon>Pseudomonadati</taxon>
        <taxon>Thermodesulfobacteriota</taxon>
        <taxon>Desulfuromonadia</taxon>
        <taxon>Geobacterales</taxon>
        <taxon>Geobacteraceae</taxon>
        <taxon>Citrifermentans</taxon>
    </lineage>
</organism>
<protein>
    <recommendedName>
        <fullName evidence="1">Fluoride-specific ion channel FluC</fullName>
    </recommendedName>
</protein>
<accession>B5EDZ1</accession>
<feature type="chain" id="PRO_1000206249" description="Fluoride-specific ion channel FluC">
    <location>
        <begin position="1"/>
        <end position="124"/>
    </location>
</feature>
<feature type="transmembrane region" description="Helical" evidence="1">
    <location>
        <begin position="5"/>
        <end position="25"/>
    </location>
</feature>
<feature type="transmembrane region" description="Helical" evidence="1">
    <location>
        <begin position="32"/>
        <end position="52"/>
    </location>
</feature>
<feature type="transmembrane region" description="Helical" evidence="1">
    <location>
        <begin position="67"/>
        <end position="87"/>
    </location>
</feature>
<feature type="transmembrane region" description="Helical" evidence="1">
    <location>
        <begin position="96"/>
        <end position="116"/>
    </location>
</feature>
<feature type="binding site" evidence="1">
    <location>
        <position position="75"/>
    </location>
    <ligand>
        <name>Na(+)</name>
        <dbReference type="ChEBI" id="CHEBI:29101"/>
        <note>structural</note>
    </ligand>
</feature>
<feature type="binding site" evidence="1">
    <location>
        <position position="78"/>
    </location>
    <ligand>
        <name>Na(+)</name>
        <dbReference type="ChEBI" id="CHEBI:29101"/>
        <note>structural</note>
    </ligand>
</feature>
<sequence>MEQLVYIALLGALGCLCRYFLSGFVYQVFGTSFPYGTLAVNLIGAFLIGLIMEFSVRSAAIPPTLRFAITIGFLGGLTTFSTFSFETFRLLEDGALLIAIVNVLVSVVACLTCTWIGIMVARAL</sequence>
<name>FLUC_CITBB</name>
<comment type="function">
    <text evidence="1">Fluoride-specific ion channel. Important for reducing fluoride concentration in the cell, thus reducing its toxicity.</text>
</comment>
<comment type="catalytic activity">
    <reaction evidence="1">
        <text>fluoride(in) = fluoride(out)</text>
        <dbReference type="Rhea" id="RHEA:76159"/>
        <dbReference type="ChEBI" id="CHEBI:17051"/>
    </reaction>
    <physiologicalReaction direction="left-to-right" evidence="1">
        <dbReference type="Rhea" id="RHEA:76160"/>
    </physiologicalReaction>
</comment>
<comment type="activity regulation">
    <text evidence="1">Na(+) is not transported, but it plays an essential structural role and its presence is essential for fluoride channel function.</text>
</comment>
<comment type="subcellular location">
    <subcellularLocation>
        <location evidence="1">Cell inner membrane</location>
        <topology evidence="1">Multi-pass membrane protein</topology>
    </subcellularLocation>
</comment>
<comment type="similarity">
    <text evidence="1">Belongs to the fluoride channel Fluc/FEX (TC 1.A.43) family.</text>
</comment>